<keyword id="KW-0997">Cell inner membrane</keyword>
<keyword id="KW-1003">Cell membrane</keyword>
<keyword id="KW-0472">Membrane</keyword>
<keyword id="KW-0653">Protein transport</keyword>
<keyword id="KW-1185">Reference proteome</keyword>
<keyword id="KW-0811">Translocation</keyword>
<keyword id="KW-0812">Transmembrane</keyword>
<keyword id="KW-1133">Transmembrane helix</keyword>
<keyword id="KW-0813">Transport</keyword>
<proteinExistence type="inferred from homology"/>
<sequence>MGGLSIWHWLIVLLIVALVFGTKKLRNIGNDLGSAVKGFKDGMKESEAPADAQQLPRSGSVNVDAKDAARSSDSNKA</sequence>
<evidence type="ECO:0000255" key="1">
    <source>
        <dbReference type="HAMAP-Rule" id="MF_00236"/>
    </source>
</evidence>
<evidence type="ECO:0000256" key="2">
    <source>
        <dbReference type="SAM" id="MobiDB-lite"/>
    </source>
</evidence>
<comment type="function">
    <text evidence="1">Part of the twin-arginine translocation (Tat) system that transports large folded proteins containing a characteristic twin-arginine motif in their signal peptide across membranes. TatA could form the protein-conducting channel of the Tat system.</text>
</comment>
<comment type="subunit">
    <text evidence="1">The Tat system comprises two distinct complexes: a TatABC complex, containing multiple copies of TatA, TatB and TatC subunits, and a separate TatA complex, containing only TatA subunits. Substrates initially bind to the TatABC complex, which probably triggers association of the separate TatA complex to form the active translocon.</text>
</comment>
<comment type="subcellular location">
    <subcellularLocation>
        <location evidence="1">Cell inner membrane</location>
        <topology evidence="1">Single-pass membrane protein</topology>
    </subcellularLocation>
</comment>
<comment type="similarity">
    <text evidence="1">Belongs to the TatA/E family.</text>
</comment>
<gene>
    <name evidence="1" type="primary">tatA</name>
    <name type="ordered locus">BPSL3128</name>
</gene>
<name>TATA_BURPS</name>
<feature type="chain" id="PRO_1000044371" description="Sec-independent protein translocase protein TatA">
    <location>
        <begin position="1"/>
        <end position="77"/>
    </location>
</feature>
<feature type="transmembrane region" description="Helical" evidence="1">
    <location>
        <begin position="1"/>
        <end position="21"/>
    </location>
</feature>
<feature type="region of interest" description="Disordered" evidence="2">
    <location>
        <begin position="43"/>
        <end position="77"/>
    </location>
</feature>
<feature type="compositionally biased region" description="Basic and acidic residues" evidence="2">
    <location>
        <begin position="64"/>
        <end position="77"/>
    </location>
</feature>
<dbReference type="EMBL" id="BX571965">
    <property type="protein sequence ID" value="CAH37138.1"/>
    <property type="molecule type" value="Genomic_DNA"/>
</dbReference>
<dbReference type="RefSeq" id="WP_004199902.1">
    <property type="nucleotide sequence ID" value="NZ_CP009538.1"/>
</dbReference>
<dbReference type="RefSeq" id="YP_109721.1">
    <property type="nucleotide sequence ID" value="NC_006350.1"/>
</dbReference>
<dbReference type="SMR" id="Q63Q97"/>
<dbReference type="STRING" id="272560.BPSL3128"/>
<dbReference type="GeneID" id="93061745"/>
<dbReference type="KEGG" id="bps:BPSL3128"/>
<dbReference type="PATRIC" id="fig|272560.51.peg.2115"/>
<dbReference type="eggNOG" id="COG1826">
    <property type="taxonomic scope" value="Bacteria"/>
</dbReference>
<dbReference type="Proteomes" id="UP000000605">
    <property type="component" value="Chromosome 1"/>
</dbReference>
<dbReference type="GO" id="GO:0033281">
    <property type="term" value="C:TAT protein transport complex"/>
    <property type="evidence" value="ECO:0007669"/>
    <property type="project" value="UniProtKB-UniRule"/>
</dbReference>
<dbReference type="GO" id="GO:0008320">
    <property type="term" value="F:protein transmembrane transporter activity"/>
    <property type="evidence" value="ECO:0007669"/>
    <property type="project" value="UniProtKB-UniRule"/>
</dbReference>
<dbReference type="GO" id="GO:0043953">
    <property type="term" value="P:protein transport by the Tat complex"/>
    <property type="evidence" value="ECO:0007669"/>
    <property type="project" value="UniProtKB-UniRule"/>
</dbReference>
<dbReference type="Gene3D" id="1.20.5.3310">
    <property type="match status" value="1"/>
</dbReference>
<dbReference type="HAMAP" id="MF_00236">
    <property type="entry name" value="TatA_E"/>
    <property type="match status" value="1"/>
</dbReference>
<dbReference type="InterPro" id="IPR003369">
    <property type="entry name" value="TatA/B/E"/>
</dbReference>
<dbReference type="InterPro" id="IPR006312">
    <property type="entry name" value="TatA/E"/>
</dbReference>
<dbReference type="NCBIfam" id="NF002813">
    <property type="entry name" value="PRK02958.1"/>
    <property type="match status" value="1"/>
</dbReference>
<dbReference type="NCBIfam" id="TIGR01411">
    <property type="entry name" value="tatAE"/>
    <property type="match status" value="1"/>
</dbReference>
<dbReference type="PANTHER" id="PTHR42982">
    <property type="entry name" value="SEC-INDEPENDENT PROTEIN TRANSLOCASE PROTEIN TATA"/>
    <property type="match status" value="1"/>
</dbReference>
<dbReference type="PANTHER" id="PTHR42982:SF1">
    <property type="entry name" value="SEC-INDEPENDENT PROTEIN TRANSLOCASE PROTEIN TATA"/>
    <property type="match status" value="1"/>
</dbReference>
<dbReference type="Pfam" id="PF02416">
    <property type="entry name" value="TatA_B_E"/>
    <property type="match status" value="1"/>
</dbReference>
<organism>
    <name type="scientific">Burkholderia pseudomallei (strain K96243)</name>
    <dbReference type="NCBI Taxonomy" id="272560"/>
    <lineage>
        <taxon>Bacteria</taxon>
        <taxon>Pseudomonadati</taxon>
        <taxon>Pseudomonadota</taxon>
        <taxon>Betaproteobacteria</taxon>
        <taxon>Burkholderiales</taxon>
        <taxon>Burkholderiaceae</taxon>
        <taxon>Burkholderia</taxon>
        <taxon>pseudomallei group</taxon>
    </lineage>
</organism>
<protein>
    <recommendedName>
        <fullName evidence="1">Sec-independent protein translocase protein TatA</fullName>
    </recommendedName>
</protein>
<accession>Q63Q97</accession>
<reference key="1">
    <citation type="journal article" date="2004" name="Proc. Natl. Acad. Sci. U.S.A.">
        <title>Genomic plasticity of the causative agent of melioidosis, Burkholderia pseudomallei.</title>
        <authorList>
            <person name="Holden M.T.G."/>
            <person name="Titball R.W."/>
            <person name="Peacock S.J."/>
            <person name="Cerdeno-Tarraga A.-M."/>
            <person name="Atkins T."/>
            <person name="Crossman L.C."/>
            <person name="Pitt T."/>
            <person name="Churcher C."/>
            <person name="Mungall K.L."/>
            <person name="Bentley S.D."/>
            <person name="Sebaihia M."/>
            <person name="Thomson N.R."/>
            <person name="Bason N."/>
            <person name="Beacham I.R."/>
            <person name="Brooks K."/>
            <person name="Brown K.A."/>
            <person name="Brown N.F."/>
            <person name="Challis G.L."/>
            <person name="Cherevach I."/>
            <person name="Chillingworth T."/>
            <person name="Cronin A."/>
            <person name="Crossett B."/>
            <person name="Davis P."/>
            <person name="DeShazer D."/>
            <person name="Feltwell T."/>
            <person name="Fraser A."/>
            <person name="Hance Z."/>
            <person name="Hauser H."/>
            <person name="Holroyd S."/>
            <person name="Jagels K."/>
            <person name="Keith K.E."/>
            <person name="Maddison M."/>
            <person name="Moule S."/>
            <person name="Price C."/>
            <person name="Quail M.A."/>
            <person name="Rabbinowitsch E."/>
            <person name="Rutherford K."/>
            <person name="Sanders M."/>
            <person name="Simmonds M."/>
            <person name="Songsivilai S."/>
            <person name="Stevens K."/>
            <person name="Tumapa S."/>
            <person name="Vesaratchavest M."/>
            <person name="Whitehead S."/>
            <person name="Yeats C."/>
            <person name="Barrell B.G."/>
            <person name="Oyston P.C.F."/>
            <person name="Parkhill J."/>
        </authorList>
    </citation>
    <scope>NUCLEOTIDE SEQUENCE [LARGE SCALE GENOMIC DNA]</scope>
    <source>
        <strain>K96243</strain>
    </source>
</reference>